<organism>
    <name type="scientific">Homo sapiens</name>
    <name type="common">Human</name>
    <dbReference type="NCBI Taxonomy" id="9606"/>
    <lineage>
        <taxon>Eukaryota</taxon>
        <taxon>Metazoa</taxon>
        <taxon>Chordata</taxon>
        <taxon>Craniata</taxon>
        <taxon>Vertebrata</taxon>
        <taxon>Euteleostomi</taxon>
        <taxon>Mammalia</taxon>
        <taxon>Eutheria</taxon>
        <taxon>Euarchontoglires</taxon>
        <taxon>Primates</taxon>
        <taxon>Haplorrhini</taxon>
        <taxon>Catarrhini</taxon>
        <taxon>Hominidae</taxon>
        <taxon>Homo</taxon>
    </lineage>
</organism>
<sequence length="600" mass="69239">MASNHKSSAARPVSRGGVGLTGRPPSGIRPLSGNIRVATAMPPGTARPGSRGCPIGTGGVLSSQIKVAHRPVTQQGLTGMKTGTKGPQRQILDKSYYLGLLRSKISELTTEVNKLQKGIEMYNQENSVYLSYEKRAETLAVEIKELQGQLADYNMLVDKLNTNTEMEEVMNDYNMLKAQNDRETQSLDVIFTERQAKEKQIRSVEEEIEQEKQATDDIIKNMSFENQVKYLEMKTTNEKLLQELDTLQQQLDSQNMKKESLEAEIAHSQVKQEAVLLHEKLYELESHRDQMIAEDKSIGSPMEEREKLLKQIKDDNQEIASMERQLTDTKEKINQFIEEIRQLDMDLEEHQGEMNQKYKELKKREEHMDTFIETFEETKNQELKRKAQIEANIVALLEHCSRNINRIEQISSITNQELKMMQDDLNFKSTEVQKSQSTAQNLTSDIQRLQLDLQKMELLESKMTEEQHSLKSKIKQMTTDLEIYNDLPALKSSGEEKIKKLHQERMILSTHRNAFKKIMEKQNIEYEALKTQLQENETHSQLTNLERKWQHLEQNNFAMKEFIATKSQESDYQPIKKNVTKQIAEYNKTIVDALHSTSGN</sequence>
<protein>
    <recommendedName>
        <fullName>Intraflagellar transport protein 74 homolog</fullName>
    </recommendedName>
    <alternativeName>
        <fullName evidence="16">Capillary morphogenesis gene 1 protein</fullName>
        <shortName evidence="16 17">CMG-1</shortName>
    </alternativeName>
    <alternativeName>
        <fullName>Coiled-coil domain-containing protein 2</fullName>
    </alternativeName>
</protein>
<accession>Q96LB3</accession>
<accession>Q3B789</accession>
<accession>Q5VY34</accession>
<accession>Q6PGQ8</accession>
<accession>Q9H643</accession>
<accession>Q9H8G7</accession>
<reference key="1">
    <citation type="journal article" date="2001" name="J. Cell Sci.">
        <title>Differential gene expression during capillary morphogenesis in 3D collagen matrices: regulated expression of genes involved in basement membrane matrix assembly, cell cycle progression, cellular differentiation and G-protein signaling.</title>
        <authorList>
            <person name="Bell S.E."/>
            <person name="Mavila A."/>
            <person name="Salazar R."/>
            <person name="Bayless K.J."/>
            <person name="Kanagala S."/>
            <person name="Maxwell S.A."/>
            <person name="Davis G.E."/>
        </authorList>
    </citation>
    <scope>NUCLEOTIDE SEQUENCE [MRNA] (ISOFORM 1)</scope>
    <scope>TISSUE SPECIFICITY</scope>
    <scope>SUBCELLULAR LOCATION</scope>
    <source>
        <tissue>Umbilical vein</tissue>
    </source>
</reference>
<reference key="2">
    <citation type="journal article" date="2004" name="Nat. Genet.">
        <title>Complete sequencing and characterization of 21,243 full-length human cDNAs.</title>
        <authorList>
            <person name="Ota T."/>
            <person name="Suzuki Y."/>
            <person name="Nishikawa T."/>
            <person name="Otsuki T."/>
            <person name="Sugiyama T."/>
            <person name="Irie R."/>
            <person name="Wakamatsu A."/>
            <person name="Hayashi K."/>
            <person name="Sato H."/>
            <person name="Nagai K."/>
            <person name="Kimura K."/>
            <person name="Makita H."/>
            <person name="Sekine M."/>
            <person name="Obayashi M."/>
            <person name="Nishi T."/>
            <person name="Shibahara T."/>
            <person name="Tanaka T."/>
            <person name="Ishii S."/>
            <person name="Yamamoto J."/>
            <person name="Saito K."/>
            <person name="Kawai Y."/>
            <person name="Isono Y."/>
            <person name="Nakamura Y."/>
            <person name="Nagahari K."/>
            <person name="Murakami K."/>
            <person name="Yasuda T."/>
            <person name="Iwayanagi T."/>
            <person name="Wagatsuma M."/>
            <person name="Shiratori A."/>
            <person name="Sudo H."/>
            <person name="Hosoiri T."/>
            <person name="Kaku Y."/>
            <person name="Kodaira H."/>
            <person name="Kondo H."/>
            <person name="Sugawara M."/>
            <person name="Takahashi M."/>
            <person name="Kanda K."/>
            <person name="Yokoi T."/>
            <person name="Furuya T."/>
            <person name="Kikkawa E."/>
            <person name="Omura Y."/>
            <person name="Abe K."/>
            <person name="Kamihara K."/>
            <person name="Katsuta N."/>
            <person name="Sato K."/>
            <person name="Tanikawa M."/>
            <person name="Yamazaki M."/>
            <person name="Ninomiya K."/>
            <person name="Ishibashi T."/>
            <person name="Yamashita H."/>
            <person name="Murakawa K."/>
            <person name="Fujimori K."/>
            <person name="Tanai H."/>
            <person name="Kimata M."/>
            <person name="Watanabe M."/>
            <person name="Hiraoka S."/>
            <person name="Chiba Y."/>
            <person name="Ishida S."/>
            <person name="Ono Y."/>
            <person name="Takiguchi S."/>
            <person name="Watanabe S."/>
            <person name="Yosida M."/>
            <person name="Hotuta T."/>
            <person name="Kusano J."/>
            <person name="Kanehori K."/>
            <person name="Takahashi-Fujii A."/>
            <person name="Hara H."/>
            <person name="Tanase T.-O."/>
            <person name="Nomura Y."/>
            <person name="Togiya S."/>
            <person name="Komai F."/>
            <person name="Hara R."/>
            <person name="Takeuchi K."/>
            <person name="Arita M."/>
            <person name="Imose N."/>
            <person name="Musashino K."/>
            <person name="Yuuki H."/>
            <person name="Oshima A."/>
            <person name="Sasaki N."/>
            <person name="Aotsuka S."/>
            <person name="Yoshikawa Y."/>
            <person name="Matsunawa H."/>
            <person name="Ichihara T."/>
            <person name="Shiohata N."/>
            <person name="Sano S."/>
            <person name="Moriya S."/>
            <person name="Momiyama H."/>
            <person name="Satoh N."/>
            <person name="Takami S."/>
            <person name="Terashima Y."/>
            <person name="Suzuki O."/>
            <person name="Nakagawa S."/>
            <person name="Senoh A."/>
            <person name="Mizoguchi H."/>
            <person name="Goto Y."/>
            <person name="Shimizu F."/>
            <person name="Wakebe H."/>
            <person name="Hishigaki H."/>
            <person name="Watanabe T."/>
            <person name="Sugiyama A."/>
            <person name="Takemoto M."/>
            <person name="Kawakami B."/>
            <person name="Yamazaki M."/>
            <person name="Watanabe K."/>
            <person name="Kumagai A."/>
            <person name="Itakura S."/>
            <person name="Fukuzumi Y."/>
            <person name="Fujimori Y."/>
            <person name="Komiyama M."/>
            <person name="Tashiro H."/>
            <person name="Tanigami A."/>
            <person name="Fujiwara T."/>
            <person name="Ono T."/>
            <person name="Yamada K."/>
            <person name="Fujii Y."/>
            <person name="Ozaki K."/>
            <person name="Hirao M."/>
            <person name="Ohmori Y."/>
            <person name="Kawabata A."/>
            <person name="Hikiji T."/>
            <person name="Kobatake N."/>
            <person name="Inagaki H."/>
            <person name="Ikema Y."/>
            <person name="Okamoto S."/>
            <person name="Okitani R."/>
            <person name="Kawakami T."/>
            <person name="Noguchi S."/>
            <person name="Itoh T."/>
            <person name="Shigeta K."/>
            <person name="Senba T."/>
            <person name="Matsumura K."/>
            <person name="Nakajima Y."/>
            <person name="Mizuno T."/>
            <person name="Morinaga M."/>
            <person name="Sasaki M."/>
            <person name="Togashi T."/>
            <person name="Oyama M."/>
            <person name="Hata H."/>
            <person name="Watanabe M."/>
            <person name="Komatsu T."/>
            <person name="Mizushima-Sugano J."/>
            <person name="Satoh T."/>
            <person name="Shirai Y."/>
            <person name="Takahashi Y."/>
            <person name="Nakagawa K."/>
            <person name="Okumura K."/>
            <person name="Nagase T."/>
            <person name="Nomura N."/>
            <person name="Kikuchi H."/>
            <person name="Masuho Y."/>
            <person name="Yamashita R."/>
            <person name="Nakai K."/>
            <person name="Yada T."/>
            <person name="Nakamura Y."/>
            <person name="Ohara O."/>
            <person name="Isogai T."/>
            <person name="Sugano S."/>
        </authorList>
    </citation>
    <scope>NUCLEOTIDE SEQUENCE [LARGE SCALE MRNA] (ISOFORM 1)</scope>
    <scope>VARIANTS LEU-224 AND ILE-597</scope>
    <source>
        <tissue>Placenta</tissue>
    </source>
</reference>
<reference key="3">
    <citation type="journal article" date="2004" name="Nature">
        <title>DNA sequence and analysis of human chromosome 9.</title>
        <authorList>
            <person name="Humphray S.J."/>
            <person name="Oliver K."/>
            <person name="Hunt A.R."/>
            <person name="Plumb R.W."/>
            <person name="Loveland J.E."/>
            <person name="Howe K.L."/>
            <person name="Andrews T.D."/>
            <person name="Searle S."/>
            <person name="Hunt S.E."/>
            <person name="Scott C.E."/>
            <person name="Jones M.C."/>
            <person name="Ainscough R."/>
            <person name="Almeida J.P."/>
            <person name="Ambrose K.D."/>
            <person name="Ashwell R.I.S."/>
            <person name="Babbage A.K."/>
            <person name="Babbage S."/>
            <person name="Bagguley C.L."/>
            <person name="Bailey J."/>
            <person name="Banerjee R."/>
            <person name="Barker D.J."/>
            <person name="Barlow K.F."/>
            <person name="Bates K."/>
            <person name="Beasley H."/>
            <person name="Beasley O."/>
            <person name="Bird C.P."/>
            <person name="Bray-Allen S."/>
            <person name="Brown A.J."/>
            <person name="Brown J.Y."/>
            <person name="Burford D."/>
            <person name="Burrill W."/>
            <person name="Burton J."/>
            <person name="Carder C."/>
            <person name="Carter N.P."/>
            <person name="Chapman J.C."/>
            <person name="Chen Y."/>
            <person name="Clarke G."/>
            <person name="Clark S.Y."/>
            <person name="Clee C.M."/>
            <person name="Clegg S."/>
            <person name="Collier R.E."/>
            <person name="Corby N."/>
            <person name="Crosier M."/>
            <person name="Cummings A.T."/>
            <person name="Davies J."/>
            <person name="Dhami P."/>
            <person name="Dunn M."/>
            <person name="Dutta I."/>
            <person name="Dyer L.W."/>
            <person name="Earthrowl M.E."/>
            <person name="Faulkner L."/>
            <person name="Fleming C.J."/>
            <person name="Frankish A."/>
            <person name="Frankland J.A."/>
            <person name="French L."/>
            <person name="Fricker D.G."/>
            <person name="Garner P."/>
            <person name="Garnett J."/>
            <person name="Ghori J."/>
            <person name="Gilbert J.G.R."/>
            <person name="Glison C."/>
            <person name="Grafham D.V."/>
            <person name="Gribble S."/>
            <person name="Griffiths C."/>
            <person name="Griffiths-Jones S."/>
            <person name="Grocock R."/>
            <person name="Guy J."/>
            <person name="Hall R.E."/>
            <person name="Hammond S."/>
            <person name="Harley J.L."/>
            <person name="Harrison E.S.I."/>
            <person name="Hart E.A."/>
            <person name="Heath P.D."/>
            <person name="Henderson C.D."/>
            <person name="Hopkins B.L."/>
            <person name="Howard P.J."/>
            <person name="Howden P.J."/>
            <person name="Huckle E."/>
            <person name="Johnson C."/>
            <person name="Johnson D."/>
            <person name="Joy A.A."/>
            <person name="Kay M."/>
            <person name="Keenan S."/>
            <person name="Kershaw J.K."/>
            <person name="Kimberley A.M."/>
            <person name="King A."/>
            <person name="Knights A."/>
            <person name="Laird G.K."/>
            <person name="Langford C."/>
            <person name="Lawlor S."/>
            <person name="Leongamornlert D.A."/>
            <person name="Leversha M."/>
            <person name="Lloyd C."/>
            <person name="Lloyd D.M."/>
            <person name="Lovell J."/>
            <person name="Martin S."/>
            <person name="Mashreghi-Mohammadi M."/>
            <person name="Matthews L."/>
            <person name="McLaren S."/>
            <person name="McLay K.E."/>
            <person name="McMurray A."/>
            <person name="Milne S."/>
            <person name="Nickerson T."/>
            <person name="Nisbett J."/>
            <person name="Nordsiek G."/>
            <person name="Pearce A.V."/>
            <person name="Peck A.I."/>
            <person name="Porter K.M."/>
            <person name="Pandian R."/>
            <person name="Pelan S."/>
            <person name="Phillimore B."/>
            <person name="Povey S."/>
            <person name="Ramsey Y."/>
            <person name="Rand V."/>
            <person name="Scharfe M."/>
            <person name="Sehra H.K."/>
            <person name="Shownkeen R."/>
            <person name="Sims S.K."/>
            <person name="Skuce C.D."/>
            <person name="Smith M."/>
            <person name="Steward C.A."/>
            <person name="Swarbreck D."/>
            <person name="Sycamore N."/>
            <person name="Tester J."/>
            <person name="Thorpe A."/>
            <person name="Tracey A."/>
            <person name="Tromans A."/>
            <person name="Thomas D.W."/>
            <person name="Wall M."/>
            <person name="Wallis J.M."/>
            <person name="West A.P."/>
            <person name="Whitehead S.L."/>
            <person name="Willey D.L."/>
            <person name="Williams S.A."/>
            <person name="Wilming L."/>
            <person name="Wray P.W."/>
            <person name="Young L."/>
            <person name="Ashurst J.L."/>
            <person name="Coulson A."/>
            <person name="Blocker H."/>
            <person name="Durbin R.M."/>
            <person name="Sulston J.E."/>
            <person name="Hubbard T."/>
            <person name="Jackson M.J."/>
            <person name="Bentley D.R."/>
            <person name="Beck S."/>
            <person name="Rogers J."/>
            <person name="Dunham I."/>
        </authorList>
    </citation>
    <scope>NUCLEOTIDE SEQUENCE [LARGE SCALE GENOMIC DNA]</scope>
</reference>
<reference key="4">
    <citation type="submission" date="2005-09" db="EMBL/GenBank/DDBJ databases">
        <authorList>
            <person name="Mural R.J."/>
            <person name="Istrail S."/>
            <person name="Sutton G.G."/>
            <person name="Florea L."/>
            <person name="Halpern A.L."/>
            <person name="Mobarry C.M."/>
            <person name="Lippert R."/>
            <person name="Walenz B."/>
            <person name="Shatkay H."/>
            <person name="Dew I."/>
            <person name="Miller J.R."/>
            <person name="Flanigan M.J."/>
            <person name="Edwards N.J."/>
            <person name="Bolanos R."/>
            <person name="Fasulo D."/>
            <person name="Halldorsson B.V."/>
            <person name="Hannenhalli S."/>
            <person name="Turner R."/>
            <person name="Yooseph S."/>
            <person name="Lu F."/>
            <person name="Nusskern D.R."/>
            <person name="Shue B.C."/>
            <person name="Zheng X.H."/>
            <person name="Zhong F."/>
            <person name="Delcher A.L."/>
            <person name="Huson D.H."/>
            <person name="Kravitz S.A."/>
            <person name="Mouchard L."/>
            <person name="Reinert K."/>
            <person name="Remington K.A."/>
            <person name="Clark A.G."/>
            <person name="Waterman M.S."/>
            <person name="Eichler E.E."/>
            <person name="Adams M.D."/>
            <person name="Hunkapiller M.W."/>
            <person name="Myers E.W."/>
            <person name="Venter J.C."/>
        </authorList>
    </citation>
    <scope>NUCLEOTIDE SEQUENCE [LARGE SCALE GENOMIC DNA]</scope>
</reference>
<reference key="5">
    <citation type="journal article" date="2004" name="Genome Res.">
        <title>The status, quality, and expansion of the NIH full-length cDNA project: the Mammalian Gene Collection (MGC).</title>
        <authorList>
            <consortium name="The MGC Project Team"/>
        </authorList>
    </citation>
    <scope>NUCLEOTIDE SEQUENCE [LARGE SCALE MRNA] (ISOFORM 2)</scope>
    <source>
        <tissue>Testis</tissue>
    </source>
</reference>
<reference key="6">
    <citation type="submission" date="2003-04" db="EMBL/GenBank/DDBJ databases">
        <title>Full-length cDNA libraries and normalization.</title>
        <authorList>
            <person name="Li W.B."/>
            <person name="Gruber C."/>
            <person name="Jessee J."/>
            <person name="Polayes D."/>
        </authorList>
    </citation>
    <scope>NUCLEOTIDE SEQUENCE [LARGE SCALE MRNA] OF 197-372 (ISOFORM 2)</scope>
    <source>
        <tissue>Thymus</tissue>
    </source>
</reference>
<reference key="7">
    <citation type="journal article" date="2004" name="J. Cell Biol.">
        <title>Primary cilia of human endothelial cells disassemble under laminar shear stress.</title>
        <authorList>
            <person name="Iomini C."/>
            <person name="Tejada K."/>
            <person name="Mo W."/>
            <person name="Vaananen H."/>
            <person name="Piperno G."/>
        </authorList>
    </citation>
    <scope>SUBCELLULAR LOCATION</scope>
</reference>
<reference key="8">
    <citation type="journal article" date="2005" name="J. Biol. Chem.">
        <title>Characterization of the intraflagellar transport complex B core: direct interaction of the IFT81 and IFT74/72 subunits.</title>
        <authorList>
            <person name="Lucker B.F."/>
            <person name="Behal R.H."/>
            <person name="Qin H."/>
            <person name="Siron L.C."/>
            <person name="Taggart W.D."/>
            <person name="Rosenbaum J.L."/>
            <person name="Cole D.G."/>
        </authorList>
    </citation>
    <scope>INTERACTION WITH IFT81</scope>
</reference>
<reference key="9">
    <citation type="journal article" date="2013" name="PLoS Genet.">
        <title>Active transport and diffusion barriers restrict Joubert syndrome-associated ARL13B/ARL-13 to an inv-like ciliary membrane subdomain.</title>
        <authorList>
            <person name="Cevik S."/>
            <person name="Sanders A.A."/>
            <person name="Van Wijk E."/>
            <person name="Boldt K."/>
            <person name="Clarke L."/>
            <person name="van Reeuwijk J."/>
            <person name="Hori Y."/>
            <person name="Horn N."/>
            <person name="Hetterschijt L."/>
            <person name="Wdowicz A."/>
            <person name="Mullins A."/>
            <person name="Kida K."/>
            <person name="Kaplan O.I."/>
            <person name="van Beersum S.E."/>
            <person name="Man Wu K."/>
            <person name="Letteboer S.J."/>
            <person name="Mans D.A."/>
            <person name="Katada T."/>
            <person name="Kontani K."/>
            <person name="Ueffing M."/>
            <person name="Roepman R."/>
            <person name="Kremer H."/>
            <person name="Blacque O.E."/>
        </authorList>
    </citation>
    <scope>INTERACTION WITH ARL13B</scope>
</reference>
<reference key="10">
    <citation type="journal article" date="2013" name="Science">
        <title>Molecular basis of tubulin transport within the cilium by IFT74 and IFT81.</title>
        <authorList>
            <person name="Bhogaraju S."/>
            <person name="Cajanek L."/>
            <person name="Fort C."/>
            <person name="Blisnick T."/>
            <person name="Weber K."/>
            <person name="Taschner M."/>
            <person name="Mizuno N."/>
            <person name="Lamla S."/>
            <person name="Bastin P."/>
            <person name="Nigg E.A."/>
            <person name="Lorentzen E."/>
        </authorList>
    </citation>
    <scope>FUNCTION</scope>
    <scope>SUBCELLULAR LOCATION</scope>
    <scope>IDENTIFICATION IN THE IFT COMPLEX B</scope>
    <scope>INTERACTION WITH BETA-TUBULIN AND IFT81</scope>
</reference>
<reference key="11">
    <citation type="journal article" date="2014" name="Mol. Cell. Proteomics">
        <title>Immunoaffinity enrichment and mass spectrometry analysis of protein methylation.</title>
        <authorList>
            <person name="Guo A."/>
            <person name="Gu H."/>
            <person name="Zhou J."/>
            <person name="Mulhern D."/>
            <person name="Wang Y."/>
            <person name="Lee K.A."/>
            <person name="Yang V."/>
            <person name="Aguiar M."/>
            <person name="Kornhauser J."/>
            <person name="Jia X."/>
            <person name="Ren J."/>
            <person name="Beausoleil S.A."/>
            <person name="Silva J.C."/>
            <person name="Vemulapalli V."/>
            <person name="Bedford M.T."/>
            <person name="Comb M.J."/>
        </authorList>
    </citation>
    <scope>METHYLATION [LARGE SCALE ANALYSIS] AT ARG-51</scope>
    <scope>IDENTIFICATION BY MASS SPECTROMETRY [LARGE SCALE ANALYSIS]</scope>
    <source>
        <tissue>Colon carcinoma</tissue>
    </source>
</reference>
<reference key="12">
    <citation type="journal article" date="2016" name="Am. J. Hum. Genet.">
        <title>Copy-Number variation contributes to the mutational load of Bardet-Biedl syndrome.</title>
        <authorList>
            <person name="Lindstrand A."/>
            <person name="Frangakis S."/>
            <person name="Carvalho C.M."/>
            <person name="Richardson E.B."/>
            <person name="McFadden K.A."/>
            <person name="Willer J.R."/>
            <person name="Pehlivan D."/>
            <person name="Liu P."/>
            <person name="Pediaditakis I.L."/>
            <person name="Sabo A."/>
            <person name="Lewis R.A."/>
            <person name="Banin E."/>
            <person name="Lupski J.R."/>
            <person name="Davis E.E."/>
            <person name="Katsanis N."/>
        </authorList>
    </citation>
    <scope>INVOLVEMENT IN BBS22</scope>
    <scope>VARIANT MET-579</scope>
</reference>
<reference key="13">
    <citation type="journal article" date="2017" name="Dev. Cell">
        <title>The CEP19-RABL2 GTPase complex binds IFT-B to initiate intraflagellar transport at the ciliary base.</title>
        <authorList>
            <person name="Kanie T."/>
            <person name="Abbott K.L."/>
            <person name="Mooney N.A."/>
            <person name="Plowey E.D."/>
            <person name="Demeter J."/>
            <person name="Jackson P.K."/>
        </authorList>
    </citation>
    <scope>INTERACTION WITH RABL2B AND IFT81</scope>
</reference>
<reference key="14">
    <citation type="journal article" date="2017" name="Mol. Biol. Cell">
        <title>RABL2 interacts with the intraflagellar transport-B complex and CEP19 and participates in ciliary assembly.</title>
        <authorList>
            <person name="Nishijima Y."/>
            <person name="Hagiya Y."/>
            <person name="Kubo T."/>
            <person name="Takei R."/>
            <person name="Katoh Y."/>
            <person name="Nakayama K."/>
        </authorList>
    </citation>
    <scope>INTERACTION WITH RABL2B AND IFT81</scope>
</reference>
<reference key="15">
    <citation type="journal article" date="2021" name="Front. Genet.">
        <title>Case Report: Second Report of Joubert Syndrome Caused by Biallelic Variants in IFT74.</title>
        <authorList>
            <person name="Zhongling K."/>
            <person name="Guoming L."/>
            <person name="Yanhui C."/>
            <person name="Xiaoru C."/>
        </authorList>
    </citation>
    <scope>INVOLVEMENT IN JBTS40</scope>
    <scope>VARIANTS JBTS40 GLU-179 AND 285-GLU--ASN-600 DEL</scope>
</reference>
<reference key="16">
    <citation type="journal article" date="2021" name="Genet. Med.">
        <title>Disrupted intraflagellar transport due to IFT74 variants causes Joubert syndrome.</title>
        <authorList>
            <person name="Luo M."/>
            <person name="Lin Z."/>
            <person name="Zhu T."/>
            <person name="Jin M."/>
            <person name="Meng D."/>
            <person name="He R."/>
            <person name="Cao Z."/>
            <person name="Shen Y."/>
            <person name="Lu C."/>
            <person name="Cai R."/>
            <person name="Zhao Y."/>
            <person name="Wang X."/>
            <person name="Li H."/>
            <person name="Wu S."/>
            <person name="Zou X."/>
            <person name="Luo G."/>
            <person name="Cao L."/>
            <person name="Huang M."/>
            <person name="Jiao H."/>
            <person name="Gao H."/>
            <person name="Sui R."/>
            <person name="Zhao C."/>
            <person name="Ma X."/>
            <person name="Cao M."/>
        </authorList>
    </citation>
    <scope>INVOLVEMENT IN JBTS40</scope>
    <scope>VARIANTS JBTS40 29-ARG--ASN-600 DEL AND GLU-179</scope>
    <scope>CHARACTERIZATION OF VARIANT JBTS40 GLU-179</scope>
    <scope>INTERACTION WITH IFT27 AND IFT81</scope>
</reference>
<reference key="17">
    <citation type="journal article" date="2021" name="Hum. Genet.">
        <title>A missense mutation in IFT74, encoding for an essential component for intraflagellar transport of Tubulin, causes asthenozoospermia and male infertility without clinical signs of Bardet-Biedl syndrome.</title>
        <authorList>
            <person name="Lores P."/>
            <person name="Kherraf Z.E."/>
            <person name="Amiri-Yekta A."/>
            <person name="Whitfield M."/>
            <person name="Daneshipour A."/>
            <person name="Stouvenel L."/>
            <person name="Cazin C."/>
            <person name="Cavarocchi E."/>
            <person name="Coutton C."/>
            <person name="Llabador M.A."/>
            <person name="Arnoult C."/>
            <person name="Thierry-Mieg N."/>
            <person name="Ferreux L."/>
            <person name="Patrat C."/>
            <person name="Hosseini S.H."/>
            <person name="Mustapha S.F.B."/>
            <person name="Zouari R."/>
            <person name="Dulioust E."/>
            <person name="Ray P.F."/>
            <person name="Toure A."/>
        </authorList>
    </citation>
    <scope>INVOLVEMENT IN SPGF58</scope>
    <scope>VARIANT SPGF58 SER-86</scope>
    <scope>CHARACTERIZATION OF VARIANT SPGF58 SER-86</scope>
    <scope>FUNCTION</scope>
    <scope>SUBCELLULAR LOCATION</scope>
    <scope>TISSUE SPECIFICITY</scope>
</reference>
<keyword id="KW-0025">Alternative splicing</keyword>
<keyword id="KW-0083">Bardet-Biedl syndrome</keyword>
<keyword id="KW-0966">Cell projection</keyword>
<keyword id="KW-1186">Ciliopathy</keyword>
<keyword id="KW-0969">Cilium</keyword>
<keyword id="KW-0970">Cilium biogenesis/degradation</keyword>
<keyword id="KW-0175">Coiled coil</keyword>
<keyword id="KW-0968">Cytoplasmic vesicle</keyword>
<keyword id="KW-0217">Developmental protein</keyword>
<keyword id="KW-0225">Disease variant</keyword>
<keyword id="KW-0282">Flagellum</keyword>
<keyword id="KW-0979">Joubert syndrome</keyword>
<keyword id="KW-0488">Methylation</keyword>
<keyword id="KW-0550">Obesity</keyword>
<keyword id="KW-0597">Phosphoprotein</keyword>
<keyword id="KW-1267">Proteomics identification</keyword>
<keyword id="KW-1185">Reference proteome</keyword>
<evidence type="ECO:0000250" key="1">
    <source>
        <dbReference type="UniProtKB" id="Q8BKE9"/>
    </source>
</evidence>
<evidence type="ECO:0000255" key="2"/>
<evidence type="ECO:0000256" key="3">
    <source>
        <dbReference type="SAM" id="MobiDB-lite"/>
    </source>
</evidence>
<evidence type="ECO:0000269" key="4">
    <source>
    </source>
</evidence>
<evidence type="ECO:0000269" key="5">
    <source>
    </source>
</evidence>
<evidence type="ECO:0000269" key="6">
    <source>
    </source>
</evidence>
<evidence type="ECO:0000269" key="7">
    <source>
    </source>
</evidence>
<evidence type="ECO:0000269" key="8">
    <source>
    </source>
</evidence>
<evidence type="ECO:0000269" key="9">
    <source>
    </source>
</evidence>
<evidence type="ECO:0000269" key="10">
    <source>
    </source>
</evidence>
<evidence type="ECO:0000269" key="11">
    <source>
    </source>
</evidence>
<evidence type="ECO:0000269" key="12">
    <source>
    </source>
</evidence>
<evidence type="ECO:0000269" key="13">
    <source>
    </source>
</evidence>
<evidence type="ECO:0000269" key="14">
    <source>
    </source>
</evidence>
<evidence type="ECO:0000269" key="15">
    <source>
    </source>
</evidence>
<evidence type="ECO:0000303" key="16">
    <source>
    </source>
</evidence>
<evidence type="ECO:0000303" key="17">
    <source>
    </source>
</evidence>
<evidence type="ECO:0000303" key="18">
    <source>
    </source>
</evidence>
<evidence type="ECO:0000303" key="19">
    <source ref="6"/>
</evidence>
<evidence type="ECO:0000305" key="20"/>
<evidence type="ECO:0007744" key="21">
    <source>
    </source>
</evidence>
<feature type="chain" id="PRO_0000084169" description="Intraflagellar transport protein 74 homolog">
    <location>
        <begin position="1"/>
        <end position="600"/>
    </location>
</feature>
<feature type="region of interest" description="Basic region">
    <location>
        <begin position="1"/>
        <end position="90"/>
    </location>
</feature>
<feature type="region of interest" description="Disordered" evidence="3">
    <location>
        <begin position="1"/>
        <end position="33"/>
    </location>
</feature>
<feature type="region of interest" description="Important for interaction with IFT27" evidence="13">
    <location>
        <begin position="561"/>
        <end position="600"/>
    </location>
</feature>
<feature type="coiled-coil region" evidence="2">
    <location>
        <begin position="98"/>
        <end position="482"/>
    </location>
</feature>
<feature type="modified residue" description="Omega-N-methylarginine" evidence="21">
    <location>
        <position position="51"/>
    </location>
</feature>
<feature type="modified residue" description="Phosphothreonine" evidence="1">
    <location>
        <position position="73"/>
    </location>
</feature>
<feature type="splice variant" id="VSP_041328" description="In isoform 2." evidence="18 19">
    <original>GEMNQKYKELKKREEHMDTFIETFEETKNQELKRKAQIEANIVALLEHCSRNINRIEQISSITNQELKMMQDDLNFKSTEVQKSQSTAQNLTSDIQRLQLDLQKMELLESKMTEEQHSLKSKIKQMTTDLEIYNDLPALKSSGEEKIKKLHQERMILSTHRNAFKKIMEKQNIEYEALKTQLQENETHSQLTNLERKWQHLEQNNFAMKEFIATKSQESDYQPIKKNVTKQIAEYNKTIVDALHSTSGN</original>
    <variation>DPTNYGWKILEKNTGSFKKQV</variation>
    <location>
        <begin position="352"/>
        <end position="600"/>
    </location>
</feature>
<feature type="sequence variant" id="VAR_086331" description="In JBTS40; dbSNP:rs751583919." evidence="13">
    <location>
        <begin position="29"/>
        <end position="600"/>
    </location>
</feature>
<feature type="sequence variant" id="VAR_051062" description="In dbSNP:rs10812505.">
    <original>I</original>
    <variation>M</variation>
    <location>
        <position position="55"/>
    </location>
</feature>
<feature type="sequence variant" id="VAR_061667" description="In dbSNP:rs11555693.">
    <original>K</original>
    <variation>R</variation>
    <location>
        <position position="85"/>
    </location>
</feature>
<feature type="sequence variant" id="VAR_086332" description="In SPGF58; affects subcellular location, instead of being homogenously distributed along the sperm flagellum, concentrates in the proximal part of the flagellum; also affects splicing." evidence="14">
    <original>G</original>
    <variation>S</variation>
    <location>
        <position position="86"/>
    </location>
</feature>
<feature type="sequence variant" id="VAR_051063" description="In dbSNP:rs12004404.">
    <original>T</original>
    <variation>A</variation>
    <location>
        <position position="110"/>
    </location>
</feature>
<feature type="sequence variant" id="VAR_086333" description="In JBTS40; partial loss of function; contrary to wild-type, only partially rescues the phenotype of IFT74 knockdown zebrafish; does not affect interaction with IFT81 and IFT27; does not affect protein level; dbSNP:rs150219690." evidence="13">
    <original>Q</original>
    <variation>E</variation>
    <location>
        <position position="179"/>
    </location>
</feature>
<feature type="sequence variant" id="VAR_051064" description="In dbSNP:rs17694549." evidence="5">
    <original>F</original>
    <variation>L</variation>
    <location>
        <position position="224"/>
    </location>
</feature>
<feature type="sequence variant" id="VAR_086334" description="In JBTS40; dbSNP:rs1056125920." evidence="15">
    <location>
        <begin position="285"/>
        <end position="600"/>
    </location>
</feature>
<feature type="sequence variant" id="VAR_051065" description="In dbSNP:rs34628525.">
    <original>N</original>
    <variation>T</variation>
    <location>
        <position position="355"/>
    </location>
</feature>
<feature type="sequence variant" id="VAR_076977" description="In dbSNP:rs138591335." evidence="10">
    <original>V</original>
    <variation>M</variation>
    <location>
        <position position="579"/>
    </location>
</feature>
<feature type="sequence variant" id="VAR_051066" description="In dbSNP:rs3429." evidence="5">
    <original>T</original>
    <variation>I</variation>
    <location>
        <position position="597"/>
    </location>
</feature>
<feature type="sequence conflict" description="In Ref. 2; BAB14650." evidence="20" ref="2">
    <original>D</original>
    <variation>G</variation>
    <location>
        <position position="172"/>
    </location>
</feature>
<dbReference type="EMBL" id="AY040325">
    <property type="protein sequence ID" value="AAK77221.1"/>
    <property type="molecule type" value="mRNA"/>
</dbReference>
<dbReference type="EMBL" id="AK023707">
    <property type="protein sequence ID" value="BAB14650.1"/>
    <property type="status" value="ALT_SEQ"/>
    <property type="molecule type" value="mRNA"/>
</dbReference>
<dbReference type="EMBL" id="AK026274">
    <property type="protein sequence ID" value="BAB15423.1"/>
    <property type="status" value="ALT_INIT"/>
    <property type="molecule type" value="mRNA"/>
</dbReference>
<dbReference type="EMBL" id="AL355432">
    <property type="status" value="NOT_ANNOTATED_CDS"/>
    <property type="molecule type" value="Genomic_DNA"/>
</dbReference>
<dbReference type="EMBL" id="AL356133">
    <property type="status" value="NOT_ANNOTATED_CDS"/>
    <property type="molecule type" value="Genomic_DNA"/>
</dbReference>
<dbReference type="EMBL" id="CH471071">
    <property type="protein sequence ID" value="EAW58573.1"/>
    <property type="molecule type" value="Genomic_DNA"/>
</dbReference>
<dbReference type="EMBL" id="BC107742">
    <property type="protein sequence ID" value="AAI07743.1"/>
    <property type="molecule type" value="mRNA"/>
</dbReference>
<dbReference type="EMBL" id="BX436367">
    <property type="status" value="NOT_ANNOTATED_CDS"/>
    <property type="molecule type" value="mRNA"/>
</dbReference>
<dbReference type="CCDS" id="CCDS43793.1">
    <molecule id="Q96LB3-1"/>
</dbReference>
<dbReference type="CCDS" id="CCDS47955.1">
    <molecule id="Q96LB3-2"/>
</dbReference>
<dbReference type="RefSeq" id="NP_001092692.1">
    <molecule id="Q96LB3-1"/>
    <property type="nucleotide sequence ID" value="NM_001099222.3"/>
</dbReference>
<dbReference type="RefSeq" id="NP_001092693.1">
    <molecule id="Q96LB3-1"/>
    <property type="nucleotide sequence ID" value="NM_001099223.3"/>
</dbReference>
<dbReference type="RefSeq" id="NP_001092694.1">
    <molecule id="Q96LB3-2"/>
    <property type="nucleotide sequence ID" value="NM_001099224.3"/>
</dbReference>
<dbReference type="RefSeq" id="NP_079379.2">
    <molecule id="Q96LB3-1"/>
    <property type="nucleotide sequence ID" value="NM_025103.4"/>
</dbReference>
<dbReference type="SMR" id="Q96LB3"/>
<dbReference type="BioGRID" id="123156">
    <property type="interactions" value="137"/>
</dbReference>
<dbReference type="ComplexPortal" id="CPX-5022">
    <property type="entry name" value="Intraflagellar transport complex B"/>
</dbReference>
<dbReference type="CORUM" id="Q96LB3"/>
<dbReference type="FunCoup" id="Q96LB3">
    <property type="interactions" value="1059"/>
</dbReference>
<dbReference type="IntAct" id="Q96LB3">
    <property type="interactions" value="74"/>
</dbReference>
<dbReference type="MINT" id="Q96LB3"/>
<dbReference type="STRING" id="9606.ENSP00000404122"/>
<dbReference type="TCDB" id="1.X.1.1.1">
    <property type="family name" value="the intraflagellar transporter-a complex (ift-a) family"/>
</dbReference>
<dbReference type="GlyGen" id="Q96LB3">
    <property type="glycosylation" value="2 sites, 1 N-linked glycan (1 site), 1 O-linked glycan (1 site)"/>
</dbReference>
<dbReference type="iPTMnet" id="Q96LB3"/>
<dbReference type="PhosphoSitePlus" id="Q96LB3"/>
<dbReference type="BioMuta" id="IFT74"/>
<dbReference type="DMDM" id="50400610"/>
<dbReference type="jPOST" id="Q96LB3"/>
<dbReference type="MassIVE" id="Q96LB3"/>
<dbReference type="PaxDb" id="9606-ENSP00000404122"/>
<dbReference type="PeptideAtlas" id="Q96LB3"/>
<dbReference type="ProteomicsDB" id="77187">
    <molecule id="Q96LB3-1"/>
</dbReference>
<dbReference type="ProteomicsDB" id="77188">
    <molecule id="Q96LB3-2"/>
</dbReference>
<dbReference type="Pumba" id="Q96LB3"/>
<dbReference type="Antibodypedia" id="5487">
    <property type="antibodies" value="196 antibodies from 31 providers"/>
</dbReference>
<dbReference type="DNASU" id="80173"/>
<dbReference type="Ensembl" id="ENST00000380062.10">
    <molecule id="Q96LB3-1"/>
    <property type="protein sequence ID" value="ENSP00000369402.5"/>
    <property type="gene ID" value="ENSG00000096872.17"/>
</dbReference>
<dbReference type="Ensembl" id="ENST00000429045.6">
    <molecule id="Q96LB3-2"/>
    <property type="protein sequence ID" value="ENSP00000393907.2"/>
    <property type="gene ID" value="ENSG00000096872.17"/>
</dbReference>
<dbReference type="Ensembl" id="ENST00000433700.5">
    <molecule id="Q96LB3-1"/>
    <property type="protein sequence ID" value="ENSP00000389224.1"/>
    <property type="gene ID" value="ENSG00000096872.17"/>
</dbReference>
<dbReference type="Ensembl" id="ENST00000443698.5">
    <molecule id="Q96LB3-1"/>
    <property type="protein sequence ID" value="ENSP00000404122.1"/>
    <property type="gene ID" value="ENSG00000096872.17"/>
</dbReference>
<dbReference type="GeneID" id="80173"/>
<dbReference type="KEGG" id="hsa:80173"/>
<dbReference type="MANE-Select" id="ENST00000380062.10">
    <property type="protein sequence ID" value="ENSP00000369402.5"/>
    <property type="RefSeq nucleotide sequence ID" value="NM_025103.4"/>
    <property type="RefSeq protein sequence ID" value="NP_079379.2"/>
</dbReference>
<dbReference type="UCSC" id="uc003zqf.5">
    <molecule id="Q96LB3-1"/>
    <property type="organism name" value="human"/>
</dbReference>
<dbReference type="AGR" id="HGNC:21424"/>
<dbReference type="CTD" id="80173"/>
<dbReference type="DisGeNET" id="80173"/>
<dbReference type="GeneCards" id="IFT74"/>
<dbReference type="HGNC" id="HGNC:21424">
    <property type="gene designation" value="IFT74"/>
</dbReference>
<dbReference type="HPA" id="ENSG00000096872">
    <property type="expression patterns" value="Low tissue specificity"/>
</dbReference>
<dbReference type="MalaCards" id="IFT74"/>
<dbReference type="MIM" id="608040">
    <property type="type" value="gene"/>
</dbReference>
<dbReference type="MIM" id="617119">
    <property type="type" value="phenotype"/>
</dbReference>
<dbReference type="MIM" id="619582">
    <property type="type" value="phenotype"/>
</dbReference>
<dbReference type="MIM" id="619585">
    <property type="type" value="phenotype"/>
</dbReference>
<dbReference type="neXtProt" id="NX_Q96LB3"/>
<dbReference type="OpenTargets" id="ENSG00000096872"/>
<dbReference type="Orphanet" id="110">
    <property type="disease" value="Bardet-Biedl syndrome"/>
</dbReference>
<dbReference type="Orphanet" id="475">
    <property type="disease" value="Joubert syndrome"/>
</dbReference>
<dbReference type="Orphanet" id="137893">
    <property type="disease" value="Male infertility due to large-headed multiflagellar polyploid spermatozoa"/>
</dbReference>
<dbReference type="PharmGKB" id="PA134976961"/>
<dbReference type="VEuPathDB" id="HostDB:ENSG00000096872"/>
<dbReference type="eggNOG" id="ENOG502QS4E">
    <property type="taxonomic scope" value="Eukaryota"/>
</dbReference>
<dbReference type="GeneTree" id="ENSGT00390000007109"/>
<dbReference type="HOGENOM" id="CLU_027673_2_0_1"/>
<dbReference type="InParanoid" id="Q96LB3"/>
<dbReference type="OMA" id="RYWEELM"/>
<dbReference type="OrthoDB" id="444379at2759"/>
<dbReference type="PAN-GO" id="Q96LB3">
    <property type="GO annotations" value="5 GO annotations based on evolutionary models"/>
</dbReference>
<dbReference type="PhylomeDB" id="Q96LB3"/>
<dbReference type="TreeFam" id="TF318352"/>
<dbReference type="PathwayCommons" id="Q96LB3"/>
<dbReference type="Reactome" id="R-HSA-5620924">
    <property type="pathway name" value="Intraflagellar transport"/>
</dbReference>
<dbReference type="SignaLink" id="Q96LB3"/>
<dbReference type="BioGRID-ORCS" id="80173">
    <property type="hits" value="11 hits in 1156 CRISPR screens"/>
</dbReference>
<dbReference type="ChiTaRS" id="IFT74">
    <property type="organism name" value="human"/>
</dbReference>
<dbReference type="GeneWiki" id="IFT74"/>
<dbReference type="GenomeRNAi" id="80173"/>
<dbReference type="Pharos" id="Q96LB3">
    <property type="development level" value="Tbio"/>
</dbReference>
<dbReference type="PRO" id="PR:Q96LB3"/>
<dbReference type="Proteomes" id="UP000005640">
    <property type="component" value="Chromosome 9"/>
</dbReference>
<dbReference type="RNAct" id="Q96LB3">
    <property type="molecule type" value="protein"/>
</dbReference>
<dbReference type="Bgee" id="ENSG00000096872">
    <property type="expression patterns" value="Expressed in bronchial epithelial cell and 187 other cell types or tissues"/>
</dbReference>
<dbReference type="ExpressionAtlas" id="Q96LB3">
    <property type="expression patterns" value="baseline and differential"/>
</dbReference>
<dbReference type="GO" id="GO:0001669">
    <property type="term" value="C:acrosomal vesicle"/>
    <property type="evidence" value="ECO:0007669"/>
    <property type="project" value="UniProtKB-SubCell"/>
</dbReference>
<dbReference type="GO" id="GO:0005813">
    <property type="term" value="C:centrosome"/>
    <property type="evidence" value="ECO:0007669"/>
    <property type="project" value="Ensembl"/>
</dbReference>
<dbReference type="GO" id="GO:0097542">
    <property type="term" value="C:ciliary tip"/>
    <property type="evidence" value="ECO:0000304"/>
    <property type="project" value="Reactome"/>
</dbReference>
<dbReference type="GO" id="GO:0005929">
    <property type="term" value="C:cilium"/>
    <property type="evidence" value="ECO:0000318"/>
    <property type="project" value="GO_Central"/>
</dbReference>
<dbReference type="GO" id="GO:0030992">
    <property type="term" value="C:intraciliary transport particle B"/>
    <property type="evidence" value="ECO:0000353"/>
    <property type="project" value="ComplexPortal"/>
</dbReference>
<dbReference type="GO" id="GO:0031514">
    <property type="term" value="C:motile cilium"/>
    <property type="evidence" value="ECO:0000250"/>
    <property type="project" value="BHF-UCL"/>
</dbReference>
<dbReference type="GO" id="GO:0005634">
    <property type="term" value="C:nucleus"/>
    <property type="evidence" value="ECO:0007669"/>
    <property type="project" value="Ensembl"/>
</dbReference>
<dbReference type="GO" id="GO:0048487">
    <property type="term" value="F:beta-tubulin binding"/>
    <property type="evidence" value="ECO:0000314"/>
    <property type="project" value="UniProtKB"/>
</dbReference>
<dbReference type="GO" id="GO:0003682">
    <property type="term" value="F:chromatin binding"/>
    <property type="evidence" value="ECO:0007669"/>
    <property type="project" value="Ensembl"/>
</dbReference>
<dbReference type="GO" id="GO:0060271">
    <property type="term" value="P:cilium assembly"/>
    <property type="evidence" value="ECO:0000315"/>
    <property type="project" value="UniProtKB"/>
</dbReference>
<dbReference type="GO" id="GO:0007368">
    <property type="term" value="P:determination of left/right symmetry"/>
    <property type="evidence" value="ECO:0007669"/>
    <property type="project" value="Ensembl"/>
</dbReference>
<dbReference type="GO" id="GO:0007507">
    <property type="term" value="P:heart development"/>
    <property type="evidence" value="ECO:0007669"/>
    <property type="project" value="Ensembl"/>
</dbReference>
<dbReference type="GO" id="GO:0035720">
    <property type="term" value="P:intraciliary anterograde transport"/>
    <property type="evidence" value="ECO:0000303"/>
    <property type="project" value="ComplexPortal"/>
</dbReference>
<dbReference type="GO" id="GO:0035735">
    <property type="term" value="P:intraciliary transport involved in cilium assembly"/>
    <property type="evidence" value="ECO:0000315"/>
    <property type="project" value="UniProtKB"/>
</dbReference>
<dbReference type="GO" id="GO:0003334">
    <property type="term" value="P:keratinocyte development"/>
    <property type="evidence" value="ECO:0007669"/>
    <property type="project" value="Ensembl"/>
</dbReference>
<dbReference type="GO" id="GO:0043616">
    <property type="term" value="P:keratinocyte proliferation"/>
    <property type="evidence" value="ECO:0007669"/>
    <property type="project" value="Ensembl"/>
</dbReference>
<dbReference type="GO" id="GO:0010839">
    <property type="term" value="P:negative regulation of keratinocyte proliferation"/>
    <property type="evidence" value="ECO:0007669"/>
    <property type="project" value="Ensembl"/>
</dbReference>
<dbReference type="GO" id="GO:1905515">
    <property type="term" value="P:non-motile cilium assembly"/>
    <property type="evidence" value="ECO:0007669"/>
    <property type="project" value="Ensembl"/>
</dbReference>
<dbReference type="GO" id="GO:0007219">
    <property type="term" value="P:Notch signaling pathway"/>
    <property type="evidence" value="ECO:0007669"/>
    <property type="project" value="Ensembl"/>
</dbReference>
<dbReference type="GO" id="GO:0033630">
    <property type="term" value="P:positive regulation of cell adhesion mediated by integrin"/>
    <property type="evidence" value="ECO:0007669"/>
    <property type="project" value="Ensembl"/>
</dbReference>
<dbReference type="GO" id="GO:0045944">
    <property type="term" value="P:positive regulation of transcription by RNA polymerase II"/>
    <property type="evidence" value="ECO:0007669"/>
    <property type="project" value="Ensembl"/>
</dbReference>
<dbReference type="InterPro" id="IPR029602">
    <property type="entry name" value="IFT74"/>
</dbReference>
<dbReference type="PANTHER" id="PTHR31432">
    <property type="entry name" value="INTRAFLAGELLAR TRANSPORT PROTEIN 74 HOMOLOG"/>
    <property type="match status" value="1"/>
</dbReference>
<dbReference type="PANTHER" id="PTHR31432:SF0">
    <property type="entry name" value="INTRAFLAGELLAR TRANSPORT PROTEIN 74 HOMOLOG"/>
    <property type="match status" value="1"/>
</dbReference>
<comment type="function">
    <text evidence="8 14">Component of the intraflagellar transport (IFT) complex B: together with IFT81, forms a tubulin-binding module that specifically mediates transport of tubulin within the cilium (PubMed:23990561). Binds beta-tubulin via its basic region (PubMed:23990561). Required for ciliogenesis (PubMed:23990561). Essential for flagellogenesis during spermatogenesis (PubMed:33689014).</text>
</comment>
<comment type="subunit">
    <text evidence="1 7 8 9 11 12 13">Component of the IFT complex B, at least composed of IFT20, IFT22, IFT25, IFT27, IFT46, IFT52, TRAF3IP1/IFT54, IFT57, IFT74, IFT80, IFT81, and IFT88 (PubMed:23990561, PubMed:33531668). Interacts with IFT81; the interaction is direct (PubMed:15955805, PubMed:23990561, PubMed:33531668). Within the IFT complex B, IFT74 and IFT81 mediate the transport of tubulin within the cilium (PubMed:15955805, PubMed:23990561). Interacts (via basic region) with beta-tubulin (via acidic region); interaction is direct (PubMed:23990561). Interacts with ARL13B and IFT88 (PubMed:24339792). Interacts (via the IFT74/IFT81 heterodimer) with RABL2B (PubMed:28428259, PubMed:28625565). Interacts with IFT57 and IFT70B (By similarity).</text>
</comment>
<comment type="interaction">
    <interactant intactId="EBI-12066130">
        <id>Q96LB3-2</id>
    </interactant>
    <interactant intactId="EBI-10181422">
        <id>A0A1B0GWI1</id>
        <label>CCDC196</label>
    </interactant>
    <organismsDiffer>false</organismsDiffer>
    <experiments>3</experiments>
</comment>
<comment type="interaction">
    <interactant intactId="EBI-12066130">
        <id>Q96LB3-2</id>
    </interactant>
    <interactant intactId="EBI-11988027">
        <id>Q9NRI5-2</id>
        <label>DISC1</label>
    </interactant>
    <organismsDiffer>false</organismsDiffer>
    <experiments>3</experiments>
</comment>
<comment type="interaction">
    <interactant intactId="EBI-12066130">
        <id>Q96LB3-2</id>
    </interactant>
    <interactant intactId="EBI-740220">
        <id>O14964</id>
        <label>HGS</label>
    </interactant>
    <organismsDiffer>false</organismsDiffer>
    <experiments>3</experiments>
</comment>
<comment type="interaction">
    <interactant intactId="EBI-12066130">
        <id>Q96LB3-2</id>
    </interactant>
    <interactant intactId="EBI-11944793">
        <id>Q8WYA0-3</id>
        <label>IFT81</label>
    </interactant>
    <organismsDiffer>false</organismsDiffer>
    <experiments>3</experiments>
</comment>
<comment type="interaction">
    <interactant intactId="EBI-12066130">
        <id>Q96LB3-2</id>
    </interactant>
    <interactant intactId="EBI-3437878">
        <id>Q86T90</id>
        <label>KIAA1328</label>
    </interactant>
    <organismsDiffer>false</organismsDiffer>
    <experiments>3</experiments>
</comment>
<comment type="interaction">
    <interactant intactId="EBI-12066130">
        <id>Q96LB3-2</id>
    </interactant>
    <interactant intactId="EBI-455078">
        <id>Q969G3</id>
        <label>SMARCE1</label>
    </interactant>
    <organismsDiffer>false</organismsDiffer>
    <experiments>3</experiments>
</comment>
<comment type="subcellular location">
    <subcellularLocation>
        <location evidence="6">Cell projection</location>
        <location evidence="6">Cilium</location>
    </subcellularLocation>
    <subcellularLocation>
        <location evidence="4">Cytoplasmic vesicle</location>
    </subcellularLocation>
    <subcellularLocation>
        <location evidence="14">Cell projection</location>
        <location evidence="14">Cilium</location>
        <location evidence="14">Flagellum</location>
    </subcellularLocation>
    <subcellularLocation>
        <location evidence="1">Cytoplasmic vesicle</location>
        <location evidence="1">Secretory vesicle</location>
        <location evidence="1">Acrosome</location>
    </subcellularLocation>
    <text evidence="1 6">Localizes along primary cilia at interphase and around the basal body/centriole at interphase and mitosis (PubMed:15024030). In male germ cells, strongly expressed in the vesicles of spermatocytes and round spermatids and also in the acrosome and centrosome regions of elongating spermatids and in developing sperm tails (By similarity).</text>
</comment>
<comment type="alternative products">
    <event type="alternative splicing"/>
    <isoform>
        <id>Q96LB3-1</id>
        <name>1</name>
        <sequence type="displayed"/>
    </isoform>
    <isoform>
        <id>Q96LB3-2</id>
        <name>2</name>
        <sequence type="described" ref="VSP_041328"/>
    </isoform>
</comment>
<comment type="tissue specificity">
    <text evidence="4 14">Highly expressed in adult and fetal kidney and expressed at lower level in adult heart, placenta, lung, liver and pancreas, and in fetal heart, lung and liver. Little to no expression was detected in adult brain and skeletal muscle or in fetal brain, thymus and spleen (PubMed:11683410). Detected in sperm (at protein level) (PubMed:33689014).</text>
</comment>
<comment type="disease" evidence="10">
    <disease id="DI-04830">
        <name>Bardet-Biedl syndrome 22</name>
        <acronym>BBS22</acronym>
        <description>A form of Bardet-Biedl syndrome, a syndrome characterized by usually severe pigmentary retinopathy, early-onset obesity, polydactyly, hypogenitalism, renal malformation and intellectual disability. Secondary features include diabetes mellitus, hypertension and congenital heart disease. Bardet-Biedl syndrome inheritance is autosomal recessive, but three mutated alleles (two at one locus, and a third at a second locus) may be required for clinical manifestation of some forms of the disease.</description>
        <dbReference type="MIM" id="617119"/>
    </disease>
    <text>The disease is caused by variants affecting the gene represented in this entry.</text>
</comment>
<comment type="disease" evidence="13 15">
    <disease id="DI-06240">
        <name>Joubert syndrome 40</name>
        <acronym>JBTS40</acronym>
        <description>A form of Joubert syndrome, a disorder presenting with cerebellar ataxia, oculomotor apraxia, hypotonia, neonatal breathing abnormalities and psychomotor delay. Neuroradiologically, it is characterized by cerebellar vermian hypoplasia/aplasia, thickened and reoriented superior cerebellar peduncles, and an abnormally large interpeduncular fossa, giving the appearance of a molar tooth on transaxial slices (molar tooth sign). Additional variable features include retinal dystrophy, renal disease, liver fibrosis, and polydactyly. JBTS40 inheritance is autosomal recessive.</description>
        <dbReference type="MIM" id="619582"/>
    </disease>
    <text>The disease is caused by variants affecting the gene represented in this entry.</text>
</comment>
<comment type="disease" evidence="14">
    <disease id="DI-06203">
        <name>Spermatogenic failure 58</name>
        <acronym>SPGF58</acronym>
        <description>An autosomal recessive male infertility disorder characterized by absent or severely reduced sperm motility, due to multiple morphological abnormalities of the sperm flagellum.</description>
        <dbReference type="MIM" id="619585"/>
    </disease>
    <text evidence="14">The disease is caused by variants affecting the gene represented in this entry. A homozygous variant at codon 86 has been identified in 2 unrelated affected individuals. In addition to encoding a missense, this variant also affects splicing, predominantly through the induction of an in-frame deletion of 10 amino acids within exon 3. Other minor transcripts can be detected in patient's sperm that use cryptic donor sites present in intron 3, leading either to the retention of 18 bp of intron 3 and an in-frame insertion of 6 amino acids, or to the retention of 108 bp of intron 3, which induces a frameshift and a truncated protein.</text>
</comment>
<comment type="similarity">
    <text evidence="20">Belongs to the IFT74 family.</text>
</comment>
<comment type="sequence caution" evidence="20">
    <conflict type="erroneous termination">
        <sequence resource="EMBL-CDS" id="BAB14650"/>
    </conflict>
    <text>Truncated C-terminus.</text>
</comment>
<comment type="sequence caution" evidence="20">
    <conflict type="erroneous initiation">
        <sequence resource="EMBL-CDS" id="BAB15423"/>
    </conflict>
    <text>Truncated N-terminus.</text>
</comment>
<name>IFT74_HUMAN</name>
<gene>
    <name type="primary">IFT74</name>
    <name type="synonym">CCDC2</name>
    <name type="synonym">CMG1</name>
</gene>
<proteinExistence type="evidence at protein level"/>